<evidence type="ECO:0000255" key="1"/>
<evidence type="ECO:0000305" key="2"/>
<accession>P0A5D4</accession>
<accession>A0A1R3XWP2</accession>
<accession>Q10536</accession>
<accession>X2BG28</accession>
<proteinExistence type="predicted"/>
<keyword id="KW-1003">Cell membrane</keyword>
<keyword id="KW-0472">Membrane</keyword>
<keyword id="KW-1185">Reference proteome</keyword>
<keyword id="KW-0812">Transmembrane</keyword>
<keyword id="KW-1133">Transmembrane helix</keyword>
<dbReference type="EMBL" id="LT708304">
    <property type="protein sequence ID" value="SIT99496.1"/>
    <property type="molecule type" value="Genomic_DNA"/>
</dbReference>
<dbReference type="RefSeq" id="NP_854555.1">
    <property type="nucleotide sequence ID" value="NC_002945.3"/>
</dbReference>
<dbReference type="RefSeq" id="WP_003404586.1">
    <property type="nucleotide sequence ID" value="NC_002945.4"/>
</dbReference>
<dbReference type="KEGG" id="mbo:BQ2027_MB0898C"/>
<dbReference type="PATRIC" id="fig|233413.5.peg.977"/>
<dbReference type="Proteomes" id="UP000001419">
    <property type="component" value="Chromosome"/>
</dbReference>
<dbReference type="GO" id="GO:0005886">
    <property type="term" value="C:plasma membrane"/>
    <property type="evidence" value="ECO:0007669"/>
    <property type="project" value="UniProtKB-SubCell"/>
</dbReference>
<dbReference type="InterPro" id="IPR019494">
    <property type="entry name" value="FIST_C"/>
</dbReference>
<dbReference type="InterPro" id="IPR013702">
    <property type="entry name" value="FIST_domain_N"/>
</dbReference>
<dbReference type="InterPro" id="IPR016741">
    <property type="entry name" value="UCP018953"/>
</dbReference>
<dbReference type="PANTHER" id="PTHR14939">
    <property type="entry name" value="F-BOX ONLY PROTEIN 22"/>
    <property type="match status" value="1"/>
</dbReference>
<dbReference type="PANTHER" id="PTHR14939:SF5">
    <property type="entry name" value="F-BOX ONLY PROTEIN 22"/>
    <property type="match status" value="1"/>
</dbReference>
<dbReference type="Pfam" id="PF08495">
    <property type="entry name" value="FIST"/>
    <property type="match status" value="1"/>
</dbReference>
<dbReference type="Pfam" id="PF10442">
    <property type="entry name" value="FIST_C"/>
    <property type="match status" value="1"/>
</dbReference>
<dbReference type="PIRSF" id="PIRSF018953">
    <property type="entry name" value="UCP018953"/>
    <property type="match status" value="1"/>
</dbReference>
<dbReference type="SMART" id="SM00897">
    <property type="entry name" value="FIST"/>
    <property type="match status" value="1"/>
</dbReference>
<dbReference type="SMART" id="SM01204">
    <property type="entry name" value="FIST_C"/>
    <property type="match status" value="1"/>
</dbReference>
<protein>
    <recommendedName>
        <fullName>Uncharacterized protein Mb0898c</fullName>
    </recommendedName>
</protein>
<comment type="subcellular location">
    <subcellularLocation>
        <location evidence="2">Cell membrane</location>
        <topology evidence="2">Multi-pass membrane protein</topology>
    </subcellularLocation>
</comment>
<comment type="similarity">
    <text evidence="2">To M.tuberculosis Rv0628c.</text>
</comment>
<organism>
    <name type="scientific">Mycobacterium bovis (strain ATCC BAA-935 / AF2122/97)</name>
    <dbReference type="NCBI Taxonomy" id="233413"/>
    <lineage>
        <taxon>Bacteria</taxon>
        <taxon>Bacillati</taxon>
        <taxon>Actinomycetota</taxon>
        <taxon>Actinomycetes</taxon>
        <taxon>Mycobacteriales</taxon>
        <taxon>Mycobacteriaceae</taxon>
        <taxon>Mycobacterium</taxon>
        <taxon>Mycobacterium tuberculosis complex</taxon>
    </lineage>
</organism>
<sequence>MRIGVGVCTTPDARQAAVEAAGQARDELAGEAPSLAVLLGSRAHTDRAADVLSAVLQMIDPPALVGCIAQAIVAGRHEIEDEPAVVVWLASGLAAETFQLDFVRTGSGALITGYRFDRTARDLHLLLPDPYTFPSNLLIEHPNTDLPGTAVVGGVVSGGRRRGDTRLFRDHDVLTSGVVGVRLPGMRGVPVVSQGCRPIGYPYIVTGADGILITELGGRPPLQRLREIVEGLSPDERALVSHGLQIGIVVDEHLAAPGQGDFVIRGLLGADPSTGSIEIDEVVQVGATMQFQVRDAAGADKDLRLTVERAAARLPGRAAGALLFTCNGRGRRMFGVADHDASTIEELLGGIPLAGFFAAGEIGPIAGRNALHGFTASMALFVDDME</sequence>
<reference key="1">
    <citation type="journal article" date="2003" name="Proc. Natl. Acad. Sci. U.S.A.">
        <title>The complete genome sequence of Mycobacterium bovis.</title>
        <authorList>
            <person name="Garnier T."/>
            <person name="Eiglmeier K."/>
            <person name="Camus J.-C."/>
            <person name="Medina N."/>
            <person name="Mansoor H."/>
            <person name="Pryor M."/>
            <person name="Duthoy S."/>
            <person name="Grondin S."/>
            <person name="Lacroix C."/>
            <person name="Monsempe C."/>
            <person name="Simon S."/>
            <person name="Harris B."/>
            <person name="Atkin R."/>
            <person name="Doggett J."/>
            <person name="Mayes R."/>
            <person name="Keating L."/>
            <person name="Wheeler P.R."/>
            <person name="Parkhill J."/>
            <person name="Barrell B.G."/>
            <person name="Cole S.T."/>
            <person name="Gordon S.V."/>
            <person name="Hewinson R.G."/>
        </authorList>
    </citation>
    <scope>NUCLEOTIDE SEQUENCE [LARGE SCALE GENOMIC DNA]</scope>
    <source>
        <strain>ATCC BAA-935 / AF2122/97</strain>
    </source>
</reference>
<reference key="2">
    <citation type="journal article" date="2017" name="Genome Announc.">
        <title>Updated reference genome sequence and annotation of Mycobacterium bovis AF2122/97.</title>
        <authorList>
            <person name="Malone K.M."/>
            <person name="Farrell D."/>
            <person name="Stuber T.P."/>
            <person name="Schubert O.T."/>
            <person name="Aebersold R."/>
            <person name="Robbe-Austerman S."/>
            <person name="Gordon S.V."/>
        </authorList>
    </citation>
    <scope>NUCLEOTIDE SEQUENCE [LARGE SCALE GENOMIC DNA]</scope>
    <scope>GENOME REANNOTATION</scope>
    <source>
        <strain>ATCC BAA-935 / AF2122/97</strain>
    </source>
</reference>
<feature type="chain" id="PRO_0000103718" description="Uncharacterized protein Mb0898c">
    <location>
        <begin position="1"/>
        <end position="386"/>
    </location>
</feature>
<feature type="transmembrane region" description="Helical" evidence="1">
    <location>
        <begin position="54"/>
        <end position="74"/>
    </location>
</feature>
<feature type="transmembrane region" description="Helical" evidence="1">
    <location>
        <begin position="347"/>
        <end position="367"/>
    </location>
</feature>
<name>Y898_MYCBO</name>
<gene>
    <name type="ordered locus">BQ2027_MB0898C</name>
</gene>